<dbReference type="EMBL" id="CP000920">
    <property type="protein sequence ID" value="ACO21652.1"/>
    <property type="molecule type" value="Genomic_DNA"/>
</dbReference>
<dbReference type="RefSeq" id="WP_000916509.1">
    <property type="nucleotide sequence ID" value="NC_012467.1"/>
</dbReference>
<dbReference type="SMR" id="C1CKH0"/>
<dbReference type="GeneID" id="93739803"/>
<dbReference type="KEGG" id="spp:SPP_1112"/>
<dbReference type="HOGENOM" id="CLU_095424_4_0_9"/>
<dbReference type="GO" id="GO:0022625">
    <property type="term" value="C:cytosolic large ribosomal subunit"/>
    <property type="evidence" value="ECO:0007669"/>
    <property type="project" value="TreeGrafter"/>
</dbReference>
<dbReference type="GO" id="GO:0003735">
    <property type="term" value="F:structural constituent of ribosome"/>
    <property type="evidence" value="ECO:0007669"/>
    <property type="project" value="InterPro"/>
</dbReference>
<dbReference type="GO" id="GO:0006412">
    <property type="term" value="P:translation"/>
    <property type="evidence" value="ECO:0007669"/>
    <property type="project" value="UniProtKB-UniRule"/>
</dbReference>
<dbReference type="FunFam" id="2.40.50.100:FF:000004">
    <property type="entry name" value="50S ribosomal protein L27"/>
    <property type="match status" value="1"/>
</dbReference>
<dbReference type="Gene3D" id="2.40.50.100">
    <property type="match status" value="1"/>
</dbReference>
<dbReference type="HAMAP" id="MF_00539">
    <property type="entry name" value="Ribosomal_bL27"/>
    <property type="match status" value="1"/>
</dbReference>
<dbReference type="InterPro" id="IPR001684">
    <property type="entry name" value="Ribosomal_bL27"/>
</dbReference>
<dbReference type="InterPro" id="IPR018261">
    <property type="entry name" value="Ribosomal_bL27_CS"/>
</dbReference>
<dbReference type="NCBIfam" id="TIGR00062">
    <property type="entry name" value="L27"/>
    <property type="match status" value="1"/>
</dbReference>
<dbReference type="PANTHER" id="PTHR15893:SF0">
    <property type="entry name" value="LARGE RIBOSOMAL SUBUNIT PROTEIN BL27M"/>
    <property type="match status" value="1"/>
</dbReference>
<dbReference type="PANTHER" id="PTHR15893">
    <property type="entry name" value="RIBOSOMAL PROTEIN L27"/>
    <property type="match status" value="1"/>
</dbReference>
<dbReference type="Pfam" id="PF01016">
    <property type="entry name" value="Ribosomal_L27"/>
    <property type="match status" value="1"/>
</dbReference>
<dbReference type="PRINTS" id="PR00063">
    <property type="entry name" value="RIBOSOMALL27"/>
</dbReference>
<dbReference type="SUPFAM" id="SSF110324">
    <property type="entry name" value="Ribosomal L27 protein-like"/>
    <property type="match status" value="1"/>
</dbReference>
<dbReference type="PROSITE" id="PS00831">
    <property type="entry name" value="RIBOSOMAL_L27"/>
    <property type="match status" value="1"/>
</dbReference>
<proteinExistence type="inferred from homology"/>
<organism>
    <name type="scientific">Streptococcus pneumoniae (strain P1031)</name>
    <dbReference type="NCBI Taxonomy" id="488223"/>
    <lineage>
        <taxon>Bacteria</taxon>
        <taxon>Bacillati</taxon>
        <taxon>Bacillota</taxon>
        <taxon>Bacilli</taxon>
        <taxon>Lactobacillales</taxon>
        <taxon>Streptococcaceae</taxon>
        <taxon>Streptococcus</taxon>
    </lineage>
</organism>
<evidence type="ECO:0000250" key="1">
    <source>
        <dbReference type="UniProtKB" id="Q2FXT0"/>
    </source>
</evidence>
<evidence type="ECO:0000255" key="2">
    <source>
        <dbReference type="HAMAP-Rule" id="MF_00539"/>
    </source>
</evidence>
<evidence type="ECO:0000256" key="3">
    <source>
        <dbReference type="SAM" id="MobiDB-lite"/>
    </source>
</evidence>
<evidence type="ECO:0000305" key="4"/>
<gene>
    <name evidence="2" type="primary">rpmA</name>
    <name type="ordered locus">SPP_1112</name>
</gene>
<protein>
    <recommendedName>
        <fullName evidence="2">Large ribosomal subunit protein bL27</fullName>
    </recommendedName>
    <alternativeName>
        <fullName evidence="4">50S ribosomal protein L27</fullName>
    </alternativeName>
</protein>
<name>RL27_STRZP</name>
<accession>C1CKH0</accession>
<sequence length="97" mass="10462">MLKMTLNNLQLFAHKKGGGSTSNGRDSQAKRLGAKAADGQTVTGGSILYRQRGTHIYPGVNVGRGGDDTLFAKVEGVVRFERKGRDKKQVSVYPIAK</sequence>
<comment type="PTM">
    <text evidence="1">The N-terminus is cleaved by ribosomal processing cysteine protease Prp.</text>
</comment>
<comment type="similarity">
    <text evidence="2">Belongs to the bacterial ribosomal protein bL27 family.</text>
</comment>
<keyword id="KW-0687">Ribonucleoprotein</keyword>
<keyword id="KW-0689">Ribosomal protein</keyword>
<feature type="propeptide" id="PRO_0000459958" evidence="1">
    <location>
        <begin position="1"/>
        <end position="12"/>
    </location>
</feature>
<feature type="chain" id="PRO_1000195891" description="Large ribosomal subunit protein bL27">
    <location>
        <begin position="13"/>
        <end position="97"/>
    </location>
</feature>
<feature type="region of interest" description="Disordered" evidence="3">
    <location>
        <begin position="13"/>
        <end position="37"/>
    </location>
</feature>
<reference key="1">
    <citation type="journal article" date="2010" name="Genome Biol.">
        <title>Structure and dynamics of the pan-genome of Streptococcus pneumoniae and closely related species.</title>
        <authorList>
            <person name="Donati C."/>
            <person name="Hiller N.L."/>
            <person name="Tettelin H."/>
            <person name="Muzzi A."/>
            <person name="Croucher N.J."/>
            <person name="Angiuoli S.V."/>
            <person name="Oggioni M."/>
            <person name="Dunning Hotopp J.C."/>
            <person name="Hu F.Z."/>
            <person name="Riley D.R."/>
            <person name="Covacci A."/>
            <person name="Mitchell T.J."/>
            <person name="Bentley S.D."/>
            <person name="Kilian M."/>
            <person name="Ehrlich G.D."/>
            <person name="Rappuoli R."/>
            <person name="Moxon E.R."/>
            <person name="Masignani V."/>
        </authorList>
    </citation>
    <scope>NUCLEOTIDE SEQUENCE [LARGE SCALE GENOMIC DNA]</scope>
    <source>
        <strain>P1031</strain>
    </source>
</reference>